<dbReference type="EC" id="6.3.4.20" evidence="1"/>
<dbReference type="EMBL" id="CP001080">
    <property type="protein sequence ID" value="ACD66963.1"/>
    <property type="molecule type" value="Genomic_DNA"/>
</dbReference>
<dbReference type="RefSeq" id="WP_012460022.1">
    <property type="nucleotide sequence ID" value="NC_010730.1"/>
</dbReference>
<dbReference type="SMR" id="B2V5L9"/>
<dbReference type="STRING" id="436114.SYO3AOP1_1355"/>
<dbReference type="KEGG" id="sul:SYO3AOP1_1355"/>
<dbReference type="eggNOG" id="COG0603">
    <property type="taxonomic scope" value="Bacteria"/>
</dbReference>
<dbReference type="HOGENOM" id="CLU_081854_1_0_0"/>
<dbReference type="UniPathway" id="UPA00391"/>
<dbReference type="GO" id="GO:0005524">
    <property type="term" value="F:ATP binding"/>
    <property type="evidence" value="ECO:0007669"/>
    <property type="project" value="UniProtKB-UniRule"/>
</dbReference>
<dbReference type="GO" id="GO:0016879">
    <property type="term" value="F:ligase activity, forming carbon-nitrogen bonds"/>
    <property type="evidence" value="ECO:0007669"/>
    <property type="project" value="UniProtKB-UniRule"/>
</dbReference>
<dbReference type="GO" id="GO:0008270">
    <property type="term" value="F:zinc ion binding"/>
    <property type="evidence" value="ECO:0007669"/>
    <property type="project" value="UniProtKB-UniRule"/>
</dbReference>
<dbReference type="GO" id="GO:0008616">
    <property type="term" value="P:queuosine biosynthetic process"/>
    <property type="evidence" value="ECO:0007669"/>
    <property type="project" value="UniProtKB-UniRule"/>
</dbReference>
<dbReference type="CDD" id="cd01995">
    <property type="entry name" value="QueC-like"/>
    <property type="match status" value="1"/>
</dbReference>
<dbReference type="Gene3D" id="3.40.50.620">
    <property type="entry name" value="HUPs"/>
    <property type="match status" value="1"/>
</dbReference>
<dbReference type="HAMAP" id="MF_01633">
    <property type="entry name" value="QueC"/>
    <property type="match status" value="1"/>
</dbReference>
<dbReference type="InterPro" id="IPR018317">
    <property type="entry name" value="QueC"/>
</dbReference>
<dbReference type="InterPro" id="IPR014729">
    <property type="entry name" value="Rossmann-like_a/b/a_fold"/>
</dbReference>
<dbReference type="NCBIfam" id="TIGR00364">
    <property type="entry name" value="7-cyano-7-deazaguanine synthase QueC"/>
    <property type="match status" value="1"/>
</dbReference>
<dbReference type="PANTHER" id="PTHR42914">
    <property type="entry name" value="7-CYANO-7-DEAZAGUANINE SYNTHASE"/>
    <property type="match status" value="1"/>
</dbReference>
<dbReference type="PANTHER" id="PTHR42914:SF1">
    <property type="entry name" value="7-CYANO-7-DEAZAGUANINE SYNTHASE"/>
    <property type="match status" value="1"/>
</dbReference>
<dbReference type="Pfam" id="PF06508">
    <property type="entry name" value="QueC"/>
    <property type="match status" value="1"/>
</dbReference>
<dbReference type="PIRSF" id="PIRSF006293">
    <property type="entry name" value="ExsB"/>
    <property type="match status" value="1"/>
</dbReference>
<dbReference type="SUPFAM" id="SSF52402">
    <property type="entry name" value="Adenine nucleotide alpha hydrolases-like"/>
    <property type="match status" value="1"/>
</dbReference>
<comment type="function">
    <text evidence="1">Catalyzes the ATP-dependent conversion of 7-carboxy-7-deazaguanine (CDG) to 7-cyano-7-deazaguanine (preQ(0)).</text>
</comment>
<comment type="catalytic activity">
    <reaction evidence="1">
        <text>7-carboxy-7-deazaguanine + NH4(+) + ATP = 7-cyano-7-deazaguanine + ADP + phosphate + H2O + H(+)</text>
        <dbReference type="Rhea" id="RHEA:27982"/>
        <dbReference type="ChEBI" id="CHEBI:15377"/>
        <dbReference type="ChEBI" id="CHEBI:15378"/>
        <dbReference type="ChEBI" id="CHEBI:28938"/>
        <dbReference type="ChEBI" id="CHEBI:30616"/>
        <dbReference type="ChEBI" id="CHEBI:43474"/>
        <dbReference type="ChEBI" id="CHEBI:45075"/>
        <dbReference type="ChEBI" id="CHEBI:61036"/>
        <dbReference type="ChEBI" id="CHEBI:456216"/>
        <dbReference type="EC" id="6.3.4.20"/>
    </reaction>
</comment>
<comment type="cofactor">
    <cofactor evidence="1">
        <name>Zn(2+)</name>
        <dbReference type="ChEBI" id="CHEBI:29105"/>
    </cofactor>
    <text evidence="1">Binds 1 zinc ion per subunit.</text>
</comment>
<comment type="pathway">
    <text evidence="1">Purine metabolism; 7-cyano-7-deazaguanine biosynthesis.</text>
</comment>
<comment type="similarity">
    <text evidence="1">Belongs to the QueC family.</text>
</comment>
<sequence>MLKKENIIVLLSGGMDSAVLLWLSKTIFKDVYTISYSYGQKHSIELEYAKELSKIAGVKEHFIVEVPHLKQLKGSALTDENLEIPSENYPDEPPITTVPMRNLIFLSIAASFADVYEIENIGIGIHSLDSPYPDCRAEFASSAEAVINASSVMVAKKKNRIKIFTPFLGMSKTDIAKLGRELGVPFEKTYSCYKGTVPPCGECATCRQREEALRETFSDTTT</sequence>
<protein>
    <recommendedName>
        <fullName evidence="1">7-cyano-7-deazaguanine synthase</fullName>
        <ecNumber evidence="1">6.3.4.20</ecNumber>
    </recommendedName>
    <alternativeName>
        <fullName evidence="1">7-cyano-7-carbaguanine synthase</fullName>
    </alternativeName>
    <alternativeName>
        <fullName evidence="1">PreQ(0) synthase</fullName>
    </alternativeName>
    <alternativeName>
        <fullName evidence="1">Queuosine biosynthesis protein QueC</fullName>
    </alternativeName>
</protein>
<evidence type="ECO:0000255" key="1">
    <source>
        <dbReference type="HAMAP-Rule" id="MF_01633"/>
    </source>
</evidence>
<gene>
    <name evidence="1" type="primary">queC</name>
    <name type="ordered locus">SYO3AOP1_1355</name>
</gene>
<proteinExistence type="inferred from homology"/>
<accession>B2V5L9</accession>
<organism>
    <name type="scientific">Sulfurihydrogenibium sp. (strain YO3AOP1)</name>
    <dbReference type="NCBI Taxonomy" id="436114"/>
    <lineage>
        <taxon>Bacteria</taxon>
        <taxon>Pseudomonadati</taxon>
        <taxon>Aquificota</taxon>
        <taxon>Aquificia</taxon>
        <taxon>Aquificales</taxon>
        <taxon>Hydrogenothermaceae</taxon>
        <taxon>Sulfurihydrogenibium</taxon>
    </lineage>
</organism>
<reference key="1">
    <citation type="journal article" date="2009" name="J. Bacteriol.">
        <title>Complete and draft genome sequences of six members of the Aquificales.</title>
        <authorList>
            <person name="Reysenbach A.-L."/>
            <person name="Hamamura N."/>
            <person name="Podar M."/>
            <person name="Griffiths E."/>
            <person name="Ferreira S."/>
            <person name="Hochstein R."/>
            <person name="Heidelberg J."/>
            <person name="Johnson J."/>
            <person name="Mead D."/>
            <person name="Pohorille A."/>
            <person name="Sarmiento M."/>
            <person name="Schweighofer K."/>
            <person name="Seshadri R."/>
            <person name="Voytek M.A."/>
        </authorList>
    </citation>
    <scope>NUCLEOTIDE SEQUENCE [LARGE SCALE GENOMIC DNA]</scope>
    <source>
        <strain>YO3AOP1</strain>
    </source>
</reference>
<keyword id="KW-0067">ATP-binding</keyword>
<keyword id="KW-0436">Ligase</keyword>
<keyword id="KW-0479">Metal-binding</keyword>
<keyword id="KW-0547">Nucleotide-binding</keyword>
<keyword id="KW-0671">Queuosine biosynthesis</keyword>
<keyword id="KW-0862">Zinc</keyword>
<feature type="chain" id="PRO_1000186641" description="7-cyano-7-deazaguanine synthase">
    <location>
        <begin position="1"/>
        <end position="222"/>
    </location>
</feature>
<feature type="binding site" evidence="1">
    <location>
        <begin position="11"/>
        <end position="21"/>
    </location>
    <ligand>
        <name>ATP</name>
        <dbReference type="ChEBI" id="CHEBI:30616"/>
    </ligand>
</feature>
<feature type="binding site" evidence="1">
    <location>
        <position position="192"/>
    </location>
    <ligand>
        <name>Zn(2+)</name>
        <dbReference type="ChEBI" id="CHEBI:29105"/>
    </ligand>
</feature>
<feature type="binding site" evidence="1">
    <location>
        <position position="200"/>
    </location>
    <ligand>
        <name>Zn(2+)</name>
        <dbReference type="ChEBI" id="CHEBI:29105"/>
    </ligand>
</feature>
<feature type="binding site" evidence="1">
    <location>
        <position position="203"/>
    </location>
    <ligand>
        <name>Zn(2+)</name>
        <dbReference type="ChEBI" id="CHEBI:29105"/>
    </ligand>
</feature>
<feature type="binding site" evidence="1">
    <location>
        <position position="206"/>
    </location>
    <ligand>
        <name>Zn(2+)</name>
        <dbReference type="ChEBI" id="CHEBI:29105"/>
    </ligand>
</feature>
<name>QUEC_SULSY</name>